<protein>
    <recommendedName>
        <fullName evidence="1">Serine hydroxymethyltransferase</fullName>
        <shortName evidence="1">SHMT</shortName>
        <shortName evidence="1">Serine methylase</shortName>
        <ecNumber evidence="1">2.1.2.1</ecNumber>
    </recommendedName>
</protein>
<evidence type="ECO:0000255" key="1">
    <source>
        <dbReference type="HAMAP-Rule" id="MF_00051"/>
    </source>
</evidence>
<comment type="function">
    <text evidence="1">Catalyzes the reversible interconversion of serine and glycine with tetrahydrofolate (THF) serving as the one-carbon carrier. This reaction serves as the major source of one-carbon groups required for the biosynthesis of purines, thymidylate, methionine, and other important biomolecules. Also exhibits THF-independent aldolase activity toward beta-hydroxyamino acids, producing glycine and aldehydes, via a retro-aldol mechanism.</text>
</comment>
<comment type="catalytic activity">
    <reaction evidence="1">
        <text>(6R)-5,10-methylene-5,6,7,8-tetrahydrofolate + glycine + H2O = (6S)-5,6,7,8-tetrahydrofolate + L-serine</text>
        <dbReference type="Rhea" id="RHEA:15481"/>
        <dbReference type="ChEBI" id="CHEBI:15377"/>
        <dbReference type="ChEBI" id="CHEBI:15636"/>
        <dbReference type="ChEBI" id="CHEBI:33384"/>
        <dbReference type="ChEBI" id="CHEBI:57305"/>
        <dbReference type="ChEBI" id="CHEBI:57453"/>
        <dbReference type="EC" id="2.1.2.1"/>
    </reaction>
</comment>
<comment type="cofactor">
    <cofactor evidence="1">
        <name>pyridoxal 5'-phosphate</name>
        <dbReference type="ChEBI" id="CHEBI:597326"/>
    </cofactor>
</comment>
<comment type="pathway">
    <text evidence="1">One-carbon metabolism; tetrahydrofolate interconversion.</text>
</comment>
<comment type="pathway">
    <text evidence="1">Amino-acid biosynthesis; glycine biosynthesis; glycine from L-serine: step 1/1.</text>
</comment>
<comment type="subunit">
    <text evidence="1">Homodimer.</text>
</comment>
<comment type="subcellular location">
    <subcellularLocation>
        <location evidence="1">Cytoplasm</location>
    </subcellularLocation>
</comment>
<comment type="similarity">
    <text evidence="1">Belongs to the SHMT family.</text>
</comment>
<sequence length="434" mass="46334">MSAGTATDTTDLDSFFSAHLAETDPEIAKAISQELGRQQHEIELIASENIVSRAVLEAQGSVLTNKYAEGYPGRRYYGGCQFVDIAEELAIDRAKRLFGCGFANVQPNSGSQANQGVFMALMQPGDTFLGLDLAAGGHLTHGAPPNVSGKWFKPVSYTVRREDQRIDMEQVERLAQEHKPKVIIAGGSGYPRHWDFAKFREIADSVGAYFFVDMAHFAGLVAAGLHPSPFPHAHVATTTTHKTLRGPRGGMILTNDEALAKKFNSAIFPGLQGGPLMHVIAAKAVAFGEALKPEFKIYAKQVIDNARALADTIISGGYDITSGGTDNHLMLVDLQKKGLTGKAAEAALSRADITCNKNGVPFDPQKPTITSGIRLGTPASTTRGFGVAEFKQVGSLIVQVLDGIAEKGDGGDAAVEAAVKEKVHALTDRFPIYA</sequence>
<dbReference type="EC" id="2.1.2.1" evidence="1"/>
<dbReference type="EMBL" id="CP000908">
    <property type="protein sequence ID" value="ABY31558.1"/>
    <property type="molecule type" value="Genomic_DNA"/>
</dbReference>
<dbReference type="RefSeq" id="WP_003601128.1">
    <property type="nucleotide sequence ID" value="NC_010172.1"/>
</dbReference>
<dbReference type="SMR" id="A9VYW6"/>
<dbReference type="GeneID" id="72990817"/>
<dbReference type="KEGG" id="mex:Mext_3171"/>
<dbReference type="eggNOG" id="COG0112">
    <property type="taxonomic scope" value="Bacteria"/>
</dbReference>
<dbReference type="HOGENOM" id="CLU_022477_2_1_5"/>
<dbReference type="BioCyc" id="MEXT419610:MEXT_RS15940-MONOMER"/>
<dbReference type="UniPathway" id="UPA00193"/>
<dbReference type="UniPathway" id="UPA00288">
    <property type="reaction ID" value="UER01023"/>
</dbReference>
<dbReference type="GO" id="GO:0005829">
    <property type="term" value="C:cytosol"/>
    <property type="evidence" value="ECO:0007669"/>
    <property type="project" value="TreeGrafter"/>
</dbReference>
<dbReference type="GO" id="GO:0004372">
    <property type="term" value="F:glycine hydroxymethyltransferase activity"/>
    <property type="evidence" value="ECO:0007669"/>
    <property type="project" value="UniProtKB-UniRule"/>
</dbReference>
<dbReference type="GO" id="GO:0030170">
    <property type="term" value="F:pyridoxal phosphate binding"/>
    <property type="evidence" value="ECO:0007669"/>
    <property type="project" value="UniProtKB-UniRule"/>
</dbReference>
<dbReference type="GO" id="GO:0019264">
    <property type="term" value="P:glycine biosynthetic process from serine"/>
    <property type="evidence" value="ECO:0007669"/>
    <property type="project" value="UniProtKB-UniRule"/>
</dbReference>
<dbReference type="GO" id="GO:0035999">
    <property type="term" value="P:tetrahydrofolate interconversion"/>
    <property type="evidence" value="ECO:0007669"/>
    <property type="project" value="UniProtKB-UniRule"/>
</dbReference>
<dbReference type="CDD" id="cd00378">
    <property type="entry name" value="SHMT"/>
    <property type="match status" value="1"/>
</dbReference>
<dbReference type="FunFam" id="3.40.640.10:FF:000001">
    <property type="entry name" value="Serine hydroxymethyltransferase"/>
    <property type="match status" value="1"/>
</dbReference>
<dbReference type="FunFam" id="3.90.1150.10:FF:000003">
    <property type="entry name" value="Serine hydroxymethyltransferase"/>
    <property type="match status" value="1"/>
</dbReference>
<dbReference type="Gene3D" id="3.90.1150.10">
    <property type="entry name" value="Aspartate Aminotransferase, domain 1"/>
    <property type="match status" value="1"/>
</dbReference>
<dbReference type="Gene3D" id="3.40.640.10">
    <property type="entry name" value="Type I PLP-dependent aspartate aminotransferase-like (Major domain)"/>
    <property type="match status" value="1"/>
</dbReference>
<dbReference type="HAMAP" id="MF_00051">
    <property type="entry name" value="SHMT"/>
    <property type="match status" value="1"/>
</dbReference>
<dbReference type="InterPro" id="IPR015424">
    <property type="entry name" value="PyrdxlP-dep_Trfase"/>
</dbReference>
<dbReference type="InterPro" id="IPR015421">
    <property type="entry name" value="PyrdxlP-dep_Trfase_major"/>
</dbReference>
<dbReference type="InterPro" id="IPR015422">
    <property type="entry name" value="PyrdxlP-dep_Trfase_small"/>
</dbReference>
<dbReference type="InterPro" id="IPR001085">
    <property type="entry name" value="Ser_HO-MeTrfase"/>
</dbReference>
<dbReference type="InterPro" id="IPR049943">
    <property type="entry name" value="Ser_HO-MeTrfase-like"/>
</dbReference>
<dbReference type="InterPro" id="IPR019798">
    <property type="entry name" value="Ser_HO-MeTrfase_PLP_BS"/>
</dbReference>
<dbReference type="InterPro" id="IPR039429">
    <property type="entry name" value="SHMT-like_dom"/>
</dbReference>
<dbReference type="NCBIfam" id="NF000586">
    <property type="entry name" value="PRK00011.1"/>
    <property type="match status" value="1"/>
</dbReference>
<dbReference type="PANTHER" id="PTHR11680">
    <property type="entry name" value="SERINE HYDROXYMETHYLTRANSFERASE"/>
    <property type="match status" value="1"/>
</dbReference>
<dbReference type="PANTHER" id="PTHR11680:SF35">
    <property type="entry name" value="SERINE HYDROXYMETHYLTRANSFERASE 1"/>
    <property type="match status" value="1"/>
</dbReference>
<dbReference type="Pfam" id="PF00464">
    <property type="entry name" value="SHMT"/>
    <property type="match status" value="1"/>
</dbReference>
<dbReference type="PIRSF" id="PIRSF000412">
    <property type="entry name" value="SHMT"/>
    <property type="match status" value="1"/>
</dbReference>
<dbReference type="SUPFAM" id="SSF53383">
    <property type="entry name" value="PLP-dependent transferases"/>
    <property type="match status" value="1"/>
</dbReference>
<dbReference type="PROSITE" id="PS00096">
    <property type="entry name" value="SHMT"/>
    <property type="match status" value="1"/>
</dbReference>
<gene>
    <name evidence="1" type="primary">glyA</name>
    <name type="ordered locus">Mext_3171</name>
</gene>
<feature type="chain" id="PRO_1000091557" description="Serine hydroxymethyltransferase">
    <location>
        <begin position="1"/>
        <end position="434"/>
    </location>
</feature>
<feature type="binding site" evidence="1">
    <location>
        <position position="133"/>
    </location>
    <ligand>
        <name>(6S)-5,6,7,8-tetrahydrofolate</name>
        <dbReference type="ChEBI" id="CHEBI:57453"/>
    </ligand>
</feature>
<feature type="binding site" evidence="1">
    <location>
        <begin position="137"/>
        <end position="139"/>
    </location>
    <ligand>
        <name>(6S)-5,6,7,8-tetrahydrofolate</name>
        <dbReference type="ChEBI" id="CHEBI:57453"/>
    </ligand>
</feature>
<feature type="site" description="Plays an important role in substrate specificity" evidence="1">
    <location>
        <position position="241"/>
    </location>
</feature>
<feature type="modified residue" description="N6-(pyridoxal phosphate)lysine" evidence="1">
    <location>
        <position position="242"/>
    </location>
</feature>
<accession>A9VYW6</accession>
<proteinExistence type="inferred from homology"/>
<keyword id="KW-0028">Amino-acid biosynthesis</keyword>
<keyword id="KW-0963">Cytoplasm</keyword>
<keyword id="KW-0554">One-carbon metabolism</keyword>
<keyword id="KW-0663">Pyridoxal phosphate</keyword>
<keyword id="KW-0808">Transferase</keyword>
<organism>
    <name type="scientific">Methylorubrum extorquens (strain PA1)</name>
    <name type="common">Methylobacterium extorquens</name>
    <dbReference type="NCBI Taxonomy" id="419610"/>
    <lineage>
        <taxon>Bacteria</taxon>
        <taxon>Pseudomonadati</taxon>
        <taxon>Pseudomonadota</taxon>
        <taxon>Alphaproteobacteria</taxon>
        <taxon>Hyphomicrobiales</taxon>
        <taxon>Methylobacteriaceae</taxon>
        <taxon>Methylorubrum</taxon>
    </lineage>
</organism>
<reference key="1">
    <citation type="submission" date="2007-12" db="EMBL/GenBank/DDBJ databases">
        <title>Complete sequence of Methylobacterium extorquens PA1.</title>
        <authorList>
            <consortium name="US DOE Joint Genome Institute"/>
            <person name="Copeland A."/>
            <person name="Lucas S."/>
            <person name="Lapidus A."/>
            <person name="Barry K."/>
            <person name="Glavina del Rio T."/>
            <person name="Dalin E."/>
            <person name="Tice H."/>
            <person name="Pitluck S."/>
            <person name="Saunders E."/>
            <person name="Brettin T."/>
            <person name="Bruce D."/>
            <person name="Detter J.C."/>
            <person name="Han C."/>
            <person name="Schmutz J."/>
            <person name="Larimer F."/>
            <person name="Land M."/>
            <person name="Hauser L."/>
            <person name="Kyrpides N."/>
            <person name="Kim E."/>
            <person name="Marx C."/>
            <person name="Richardson P."/>
        </authorList>
    </citation>
    <scope>NUCLEOTIDE SEQUENCE [LARGE SCALE GENOMIC DNA]</scope>
    <source>
        <strain>PA1</strain>
    </source>
</reference>
<name>GLYA_METEP</name>